<evidence type="ECO:0000255" key="1">
    <source>
        <dbReference type="HAMAP-Rule" id="MF_00050"/>
    </source>
</evidence>
<sequence>MGNITAKLVKDLRDKTGAGMMDCKKALNETEGNLDKALEWLRKKGIASAEKKSGRVAAEGSIGSYIHTGSRVGVLLELNCETDFVARGDIFQSLLKDVSMQVAACPNVEYVSIDEIPEDVVKKEKQIEMGRDDLSGKPEQIKEKIVEGRIAKRLNELVLLSQPYIKDSSLTVEELVKQAAAKIGENIKVRRFTRYTLGEGIEKNQMDFAEEVASMQTN</sequence>
<dbReference type="EMBL" id="CP000825">
    <property type="protein sequence ID" value="ABV50463.1"/>
    <property type="molecule type" value="Genomic_DNA"/>
</dbReference>
<dbReference type="RefSeq" id="WP_002805668.1">
    <property type="nucleotide sequence ID" value="NC_009840.1"/>
</dbReference>
<dbReference type="SMR" id="A8G4D2"/>
<dbReference type="STRING" id="93060.P9215_08481"/>
<dbReference type="KEGG" id="pmh:P9215_08481"/>
<dbReference type="eggNOG" id="COG0264">
    <property type="taxonomic scope" value="Bacteria"/>
</dbReference>
<dbReference type="HOGENOM" id="CLU_047155_1_1_3"/>
<dbReference type="OrthoDB" id="9808348at2"/>
<dbReference type="Proteomes" id="UP000002014">
    <property type="component" value="Chromosome"/>
</dbReference>
<dbReference type="GO" id="GO:0005737">
    <property type="term" value="C:cytoplasm"/>
    <property type="evidence" value="ECO:0007669"/>
    <property type="project" value="UniProtKB-SubCell"/>
</dbReference>
<dbReference type="GO" id="GO:0003746">
    <property type="term" value="F:translation elongation factor activity"/>
    <property type="evidence" value="ECO:0007669"/>
    <property type="project" value="UniProtKB-UniRule"/>
</dbReference>
<dbReference type="CDD" id="cd14275">
    <property type="entry name" value="UBA_EF-Ts"/>
    <property type="match status" value="1"/>
</dbReference>
<dbReference type="FunFam" id="1.10.286.20:FF:000001">
    <property type="entry name" value="Elongation factor Ts"/>
    <property type="match status" value="1"/>
</dbReference>
<dbReference type="FunFam" id="1.10.8.10:FF:000001">
    <property type="entry name" value="Elongation factor Ts"/>
    <property type="match status" value="1"/>
</dbReference>
<dbReference type="Gene3D" id="1.10.286.20">
    <property type="match status" value="1"/>
</dbReference>
<dbReference type="Gene3D" id="1.10.8.10">
    <property type="entry name" value="DNA helicase RuvA subunit, C-terminal domain"/>
    <property type="match status" value="1"/>
</dbReference>
<dbReference type="Gene3D" id="3.30.479.20">
    <property type="entry name" value="Elongation factor Ts, dimerisation domain"/>
    <property type="match status" value="1"/>
</dbReference>
<dbReference type="HAMAP" id="MF_00050">
    <property type="entry name" value="EF_Ts"/>
    <property type="match status" value="1"/>
</dbReference>
<dbReference type="InterPro" id="IPR036402">
    <property type="entry name" value="EF-Ts_dimer_sf"/>
</dbReference>
<dbReference type="InterPro" id="IPR001816">
    <property type="entry name" value="Transl_elong_EFTs/EF1B"/>
</dbReference>
<dbReference type="InterPro" id="IPR014039">
    <property type="entry name" value="Transl_elong_EFTs/EF1B_dimer"/>
</dbReference>
<dbReference type="InterPro" id="IPR018101">
    <property type="entry name" value="Transl_elong_Ts_CS"/>
</dbReference>
<dbReference type="InterPro" id="IPR009060">
    <property type="entry name" value="UBA-like_sf"/>
</dbReference>
<dbReference type="NCBIfam" id="TIGR00116">
    <property type="entry name" value="tsf"/>
    <property type="match status" value="2"/>
</dbReference>
<dbReference type="PANTHER" id="PTHR11741">
    <property type="entry name" value="ELONGATION FACTOR TS"/>
    <property type="match status" value="1"/>
</dbReference>
<dbReference type="PANTHER" id="PTHR11741:SF10">
    <property type="entry name" value="POLYPROTEIN OF EF-TS, CHLOROPLASTIC"/>
    <property type="match status" value="1"/>
</dbReference>
<dbReference type="Pfam" id="PF00889">
    <property type="entry name" value="EF_TS"/>
    <property type="match status" value="1"/>
</dbReference>
<dbReference type="SUPFAM" id="SSF54713">
    <property type="entry name" value="Elongation factor Ts (EF-Ts), dimerisation domain"/>
    <property type="match status" value="1"/>
</dbReference>
<dbReference type="SUPFAM" id="SSF46934">
    <property type="entry name" value="UBA-like"/>
    <property type="match status" value="1"/>
</dbReference>
<dbReference type="PROSITE" id="PS01126">
    <property type="entry name" value="EF_TS_1"/>
    <property type="match status" value="1"/>
</dbReference>
<dbReference type="PROSITE" id="PS01127">
    <property type="entry name" value="EF_TS_2"/>
    <property type="match status" value="1"/>
</dbReference>
<accession>A8G4D2</accession>
<feature type="chain" id="PRO_1000057357" description="Elongation factor Ts">
    <location>
        <begin position="1"/>
        <end position="218"/>
    </location>
</feature>
<feature type="region of interest" description="Involved in Mg(2+) ion dislocation from EF-Tu" evidence="1">
    <location>
        <begin position="82"/>
        <end position="85"/>
    </location>
</feature>
<gene>
    <name evidence="1" type="primary">tsf</name>
    <name type="ordered locus">P9215_08481</name>
</gene>
<comment type="function">
    <text evidence="1">Associates with the EF-Tu.GDP complex and induces the exchange of GDP to GTP. It remains bound to the aminoacyl-tRNA.EF-Tu.GTP complex up to the GTP hydrolysis stage on the ribosome.</text>
</comment>
<comment type="subcellular location">
    <subcellularLocation>
        <location evidence="1">Cytoplasm</location>
    </subcellularLocation>
</comment>
<comment type="similarity">
    <text evidence="1">Belongs to the EF-Ts family.</text>
</comment>
<proteinExistence type="inferred from homology"/>
<name>EFTS_PROM2</name>
<organism>
    <name type="scientific">Prochlorococcus marinus (strain MIT 9215)</name>
    <dbReference type="NCBI Taxonomy" id="93060"/>
    <lineage>
        <taxon>Bacteria</taxon>
        <taxon>Bacillati</taxon>
        <taxon>Cyanobacteriota</taxon>
        <taxon>Cyanophyceae</taxon>
        <taxon>Synechococcales</taxon>
        <taxon>Prochlorococcaceae</taxon>
        <taxon>Prochlorococcus</taxon>
    </lineage>
</organism>
<reference key="1">
    <citation type="journal article" date="2007" name="PLoS Genet.">
        <title>Patterns and implications of gene gain and loss in the evolution of Prochlorococcus.</title>
        <authorList>
            <person name="Kettler G.C."/>
            <person name="Martiny A.C."/>
            <person name="Huang K."/>
            <person name="Zucker J."/>
            <person name="Coleman M.L."/>
            <person name="Rodrigue S."/>
            <person name="Chen F."/>
            <person name="Lapidus A."/>
            <person name="Ferriera S."/>
            <person name="Johnson J."/>
            <person name="Steglich C."/>
            <person name="Church G.M."/>
            <person name="Richardson P."/>
            <person name="Chisholm S.W."/>
        </authorList>
    </citation>
    <scope>NUCLEOTIDE SEQUENCE [LARGE SCALE GENOMIC DNA]</scope>
    <source>
        <strain>MIT 9215</strain>
    </source>
</reference>
<protein>
    <recommendedName>
        <fullName evidence="1">Elongation factor Ts</fullName>
        <shortName evidence="1">EF-Ts</shortName>
    </recommendedName>
</protein>
<keyword id="KW-0963">Cytoplasm</keyword>
<keyword id="KW-0251">Elongation factor</keyword>
<keyword id="KW-0648">Protein biosynthesis</keyword>